<gene>
    <name type="primary">mhcA</name>
    <name type="ORF">DDB_G0286355</name>
</gene>
<reference key="1">
    <citation type="journal article" date="1986" name="Proc. Natl. Acad. Sci. U.S.A.">
        <title>Conserved protein domains in a myosin heavy chain gene from Dictyostelium discoideum.</title>
        <authorList>
            <person name="Warrick H.M."/>
            <person name="de Lozanne A."/>
            <person name="Leinwand L.A."/>
            <person name="Spudich J.A."/>
        </authorList>
    </citation>
    <scope>NUCLEOTIDE SEQUENCE [GENOMIC DNA]</scope>
</reference>
<reference key="2">
    <citation type="journal article" date="2005" name="Nature">
        <title>The genome of the social amoeba Dictyostelium discoideum.</title>
        <authorList>
            <person name="Eichinger L."/>
            <person name="Pachebat J.A."/>
            <person name="Gloeckner G."/>
            <person name="Rajandream M.A."/>
            <person name="Sucgang R."/>
            <person name="Berriman M."/>
            <person name="Song J."/>
            <person name="Olsen R."/>
            <person name="Szafranski K."/>
            <person name="Xu Q."/>
            <person name="Tunggal B."/>
            <person name="Kummerfeld S."/>
            <person name="Madera M."/>
            <person name="Konfortov B.A."/>
            <person name="Rivero F."/>
            <person name="Bankier A.T."/>
            <person name="Lehmann R."/>
            <person name="Hamlin N."/>
            <person name="Davies R."/>
            <person name="Gaudet P."/>
            <person name="Fey P."/>
            <person name="Pilcher K."/>
            <person name="Chen G."/>
            <person name="Saunders D."/>
            <person name="Sodergren E.J."/>
            <person name="Davis P."/>
            <person name="Kerhornou A."/>
            <person name="Nie X."/>
            <person name="Hall N."/>
            <person name="Anjard C."/>
            <person name="Hemphill L."/>
            <person name="Bason N."/>
            <person name="Farbrother P."/>
            <person name="Desany B."/>
            <person name="Just E."/>
            <person name="Morio T."/>
            <person name="Rost R."/>
            <person name="Churcher C.M."/>
            <person name="Cooper J."/>
            <person name="Haydock S."/>
            <person name="van Driessche N."/>
            <person name="Cronin A."/>
            <person name="Goodhead I."/>
            <person name="Muzny D.M."/>
            <person name="Mourier T."/>
            <person name="Pain A."/>
            <person name="Lu M."/>
            <person name="Harper D."/>
            <person name="Lindsay R."/>
            <person name="Hauser H."/>
            <person name="James K.D."/>
            <person name="Quiles M."/>
            <person name="Madan Babu M."/>
            <person name="Saito T."/>
            <person name="Buchrieser C."/>
            <person name="Wardroper A."/>
            <person name="Felder M."/>
            <person name="Thangavelu M."/>
            <person name="Johnson D."/>
            <person name="Knights A."/>
            <person name="Loulseged H."/>
            <person name="Mungall K.L."/>
            <person name="Oliver K."/>
            <person name="Price C."/>
            <person name="Quail M.A."/>
            <person name="Urushihara H."/>
            <person name="Hernandez J."/>
            <person name="Rabbinowitsch E."/>
            <person name="Steffen D."/>
            <person name="Sanders M."/>
            <person name="Ma J."/>
            <person name="Kohara Y."/>
            <person name="Sharp S."/>
            <person name="Simmonds M.N."/>
            <person name="Spiegler S."/>
            <person name="Tivey A."/>
            <person name="Sugano S."/>
            <person name="White B."/>
            <person name="Walker D."/>
            <person name="Woodward J.R."/>
            <person name="Winckler T."/>
            <person name="Tanaka Y."/>
            <person name="Shaulsky G."/>
            <person name="Schleicher M."/>
            <person name="Weinstock G.M."/>
            <person name="Rosenthal A."/>
            <person name="Cox E.C."/>
            <person name="Chisholm R.L."/>
            <person name="Gibbs R.A."/>
            <person name="Loomis W.F."/>
            <person name="Platzer M."/>
            <person name="Kay R.R."/>
            <person name="Williams J.G."/>
            <person name="Dear P.H."/>
            <person name="Noegel A.A."/>
            <person name="Barrell B.G."/>
            <person name="Kuspa A."/>
        </authorList>
    </citation>
    <scope>NUCLEOTIDE SEQUENCE [LARGE SCALE GENOMIC DNA]</scope>
    <source>
        <strain>AX4</strain>
    </source>
</reference>
<reference key="3">
    <citation type="journal article" date="1985" name="Proc. Natl. Acad. Sci. U.S.A.">
        <title>Cloning and characterization of a nonmuscle myosin heavy chain cDNA.</title>
        <authorList>
            <person name="De Lozanne A."/>
            <person name="Lewis M."/>
            <person name="Spudich J.A."/>
            <person name="Leinwand L.A."/>
        </authorList>
    </citation>
    <scope>NUCLEOTIDE SEQUENCE [GENOMIC DNA] OF 2035-2116</scope>
</reference>
<reference key="4">
    <citation type="journal article" date="1990" name="FEBS Lett.">
        <title>Replacement of threonine residues by serine and alanine in a phosphorylatable heavy chain fragment of Dictyostelium myosin II.</title>
        <authorList>
            <person name="Lueck-Vielmeter D."/>
            <person name="Schleicher M."/>
            <person name="Grabatin B."/>
            <person name="Wippler J."/>
            <person name="Gerisch G."/>
        </authorList>
    </citation>
    <scope>PHOSPHORYLATION AT THR-1823; THR-1833 AND THR-2029</scope>
    <scope>MUTAGENESIS</scope>
    <source>
        <strain>AX2</strain>
    </source>
</reference>
<reference key="5">
    <citation type="journal article" date="1988" name="FEBS Lett.">
        <title>Phosphorylation of threonine residues on cloned fragments of the Dictyostelium myosin heavy chain.</title>
        <authorList>
            <person name="Wagle G."/>
            <person name="Noegel A."/>
            <person name="Scheel J."/>
            <person name="Gerisch G."/>
        </authorList>
    </citation>
    <scope>PHOSPHORYLATION AT THR-1823; THR-1833 AND THR-2029</scope>
</reference>
<reference key="6">
    <citation type="journal article" date="2006" name="BMC Genomics">
        <title>Thirteen is enough: the myosins of Dictyostelium discoideum and their light chains.</title>
        <authorList>
            <person name="Kollmar M."/>
        </authorList>
    </citation>
    <scope>NOMENCLATURE</scope>
</reference>
<reference key="7">
    <citation type="journal article" date="2008" name="Dev. Cell">
        <title>An Elmo-like protein associated with myosin II restricts spurious F-actin events to coordinate phagocytosis and chemotaxis.</title>
        <authorList>
            <person name="Isik N."/>
            <person name="Brzostowski J.A."/>
            <person name="Jin T."/>
        </authorList>
    </citation>
    <scope>INTERACTION WITH ELMOA</scope>
</reference>
<reference key="8">
    <citation type="journal article" date="1995" name="Biochemistry">
        <title>X-ray structures of the myosin motor domain of Dictyostelium discoideum complexed with MgADP.BeFx and MgADP.AlF4-.</title>
        <authorList>
            <person name="Fisher A.J."/>
            <person name="Smith C.A."/>
            <person name="Thoden J.B."/>
            <person name="Smith R."/>
            <person name="Sutoh K."/>
            <person name="Holden H.M."/>
            <person name="Rayment I."/>
        </authorList>
    </citation>
    <scope>X-RAY CRYSTALLOGRAPHY (2.6 ANGSTROMS) OF 1-762</scope>
</reference>
<reference key="9">
    <citation type="journal article" date="1995" name="Biochemistry">
        <title>X-ray structure of the magnesium(II)-pyrophosphate complex of the truncated head of Dictyostelium discoideum myosin to 2.7-A resolution.</title>
        <authorList>
            <person name="Smith C.A."/>
            <person name="Rayment I."/>
        </authorList>
    </citation>
    <scope>X-RAY CRYSTALLOGRAPHY (2.7 ANGSTROMS) OF 1-762</scope>
</reference>
<reference key="10">
    <citation type="journal article" date="1996" name="Biochemistry">
        <title>X-ray structure of the magnesium(II).ADP.vanadate complex of the Dictyostelium discoideum myosin motor domain to 1.9-A resolution.</title>
        <authorList>
            <person name="Smith C.A."/>
            <person name="Rayment I."/>
        </authorList>
    </citation>
    <scope>X-RAY CRYSTALLOGRAPHY (1.9 ANGSTROMS) OF 1-762</scope>
</reference>
<reference key="11">
    <citation type="journal article" date="1997" name="Biochemistry">
        <title>X-ray structures of the MgADP, MgATPgammaS, and MgAMPPNP complexes of the Dictyostelium discoideum myosin motor domain.</title>
        <authorList>
            <person name="Gulick A.M."/>
            <person name="Bauer C.B."/>
            <person name="Thoden J.B."/>
            <person name="Rayment I."/>
        </authorList>
    </citation>
    <scope>X-RAY CRYSTALLOGRAPHY (2.1 ANGSTROMS) OF 1-762</scope>
</reference>
<reference key="12">
    <citation type="journal article" date="1997" name="J. Mol. Biol.">
        <title>X-ray crystal structure and solution fluorescence characterization of Mg.2'(3')-O-(N-methylanthraniloyl) nucleotides bound to the Dictyostelium discoideum myosin motor domain.</title>
        <authorList>
            <person name="Bauer C.B."/>
            <person name="Kuhlman P.A."/>
            <person name="Bagshaw C.R."/>
            <person name="Rayment I."/>
        </authorList>
    </citation>
    <scope>X-RAY CRYSTALLOGRAPHY (1.9 ANGSTROMS) OF 1-762</scope>
</reference>
<reference key="13">
    <citation type="journal article" date="2001" name="EMBO J.">
        <title>Structure of a genetically engineered molecular motor.</title>
        <authorList>
            <person name="Kliche W."/>
            <person name="Fujita-Becker S."/>
            <person name="Kollmar M."/>
            <person name="Manstein D.J."/>
            <person name="Kull F.J."/>
        </authorList>
    </citation>
    <scope>X-RAY CRYSTALLOGRAPHY (2.8 ANGSTROMS) OF 1-761</scope>
</reference>
<name>MYS2_DICDI</name>
<evidence type="ECO:0000255" key="1"/>
<evidence type="ECO:0000255" key="2">
    <source>
        <dbReference type="PROSITE-ProRule" id="PRU00116"/>
    </source>
</evidence>
<evidence type="ECO:0000255" key="3">
    <source>
        <dbReference type="PROSITE-ProRule" id="PRU00782"/>
    </source>
</evidence>
<evidence type="ECO:0000255" key="4">
    <source>
        <dbReference type="PROSITE-ProRule" id="PRU01190"/>
    </source>
</evidence>
<evidence type="ECO:0000256" key="5">
    <source>
        <dbReference type="SAM" id="MobiDB-lite"/>
    </source>
</evidence>
<evidence type="ECO:0000269" key="6">
    <source>
    </source>
</evidence>
<evidence type="ECO:0000269" key="7">
    <source>
    </source>
</evidence>
<evidence type="ECO:0000305" key="8"/>
<evidence type="ECO:0007829" key="9">
    <source>
        <dbReference type="PDB" id="1D0Y"/>
    </source>
</evidence>
<evidence type="ECO:0007829" key="10">
    <source>
        <dbReference type="PDB" id="1D1A"/>
    </source>
</evidence>
<evidence type="ECO:0007829" key="11">
    <source>
        <dbReference type="PDB" id="1LVK"/>
    </source>
</evidence>
<evidence type="ECO:0007829" key="12">
    <source>
        <dbReference type="PDB" id="1MMA"/>
    </source>
</evidence>
<evidence type="ECO:0007829" key="13">
    <source>
        <dbReference type="PDB" id="1VOM"/>
    </source>
</evidence>
<evidence type="ECO:0007829" key="14">
    <source>
        <dbReference type="PDB" id="1W9I"/>
    </source>
</evidence>
<evidence type="ECO:0007829" key="15">
    <source>
        <dbReference type="PDB" id="1W9L"/>
    </source>
</evidence>
<evidence type="ECO:0007829" key="16">
    <source>
        <dbReference type="PDB" id="2AKA"/>
    </source>
</evidence>
<evidence type="ECO:0007829" key="17">
    <source>
        <dbReference type="PDB" id="2XO8"/>
    </source>
</evidence>
<evidence type="ECO:0007829" key="18">
    <source>
        <dbReference type="PDB" id="2Y0R"/>
    </source>
</evidence>
<evidence type="ECO:0007829" key="19">
    <source>
        <dbReference type="PDB" id="2Y8I"/>
    </source>
</evidence>
<evidence type="ECO:0007829" key="20">
    <source>
        <dbReference type="PDB" id="2Y9E"/>
    </source>
</evidence>
<evidence type="ECO:0007829" key="21">
    <source>
        <dbReference type="PDB" id="3MNQ"/>
    </source>
</evidence>
<evidence type="ECO:0007829" key="22">
    <source>
        <dbReference type="PDB" id="3MYK"/>
    </source>
</evidence>
<evidence type="ECO:0007829" key="23">
    <source>
        <dbReference type="PDB" id="4AE3"/>
    </source>
</evidence>
<evidence type="ECO:0007829" key="24">
    <source>
        <dbReference type="PDB" id="6Z7T"/>
    </source>
</evidence>
<dbReference type="EMBL" id="M14628">
    <property type="protein sequence ID" value="AAA33227.1"/>
    <property type="molecule type" value="Genomic_DNA"/>
</dbReference>
<dbReference type="EMBL" id="AAFI02000085">
    <property type="protein sequence ID" value="EAL64202.1"/>
    <property type="molecule type" value="Genomic_DNA"/>
</dbReference>
<dbReference type="PIR" id="A26655">
    <property type="entry name" value="A26655"/>
</dbReference>
<dbReference type="RefSeq" id="XP_637740.1">
    <property type="nucleotide sequence ID" value="XM_632648.1"/>
</dbReference>
<dbReference type="PDB" id="1D0X">
    <property type="method" value="X-ray"/>
    <property type="resolution" value="2.00 A"/>
    <property type="chains" value="A=1-759"/>
</dbReference>
<dbReference type="PDB" id="1D0Y">
    <property type="method" value="X-ray"/>
    <property type="resolution" value="2.00 A"/>
    <property type="chains" value="A=1-759"/>
</dbReference>
<dbReference type="PDB" id="1D0Z">
    <property type="method" value="X-ray"/>
    <property type="resolution" value="2.00 A"/>
    <property type="chains" value="A=1-759"/>
</dbReference>
<dbReference type="PDB" id="1D1A">
    <property type="method" value="X-ray"/>
    <property type="resolution" value="2.00 A"/>
    <property type="chains" value="A=1-759"/>
</dbReference>
<dbReference type="PDB" id="1D1B">
    <property type="method" value="X-ray"/>
    <property type="resolution" value="2.00 A"/>
    <property type="chains" value="A=1-759"/>
</dbReference>
<dbReference type="PDB" id="1D1C">
    <property type="method" value="X-ray"/>
    <property type="resolution" value="2.30 A"/>
    <property type="chains" value="A=1-759"/>
</dbReference>
<dbReference type="PDB" id="1FMV">
    <property type="method" value="X-ray"/>
    <property type="resolution" value="2.10 A"/>
    <property type="chains" value="A=1-759"/>
</dbReference>
<dbReference type="PDB" id="1FMW">
    <property type="method" value="X-ray"/>
    <property type="resolution" value="2.15 A"/>
    <property type="chains" value="A=1-759"/>
</dbReference>
<dbReference type="PDB" id="1G8X">
    <property type="method" value="X-ray"/>
    <property type="resolution" value="2.80 A"/>
    <property type="chains" value="A/B=1-761"/>
</dbReference>
<dbReference type="PDB" id="1JWY">
    <property type="method" value="X-ray"/>
    <property type="resolution" value="2.30 A"/>
    <property type="chains" value="A=3-765"/>
</dbReference>
<dbReference type="PDB" id="1JX2">
    <property type="method" value="X-ray"/>
    <property type="resolution" value="2.30 A"/>
    <property type="chains" value="A=3-765"/>
</dbReference>
<dbReference type="PDB" id="1LVK">
    <property type="method" value="X-ray"/>
    <property type="resolution" value="1.90 A"/>
    <property type="chains" value="A=1-759"/>
</dbReference>
<dbReference type="PDB" id="1MMA">
    <property type="method" value="X-ray"/>
    <property type="resolution" value="2.10 A"/>
    <property type="chains" value="A=1-759"/>
</dbReference>
<dbReference type="PDB" id="1MMD">
    <property type="method" value="X-ray"/>
    <property type="resolution" value="2.00 A"/>
    <property type="chains" value="A=1-759"/>
</dbReference>
<dbReference type="PDB" id="1MMG">
    <property type="method" value="X-ray"/>
    <property type="resolution" value="2.10 A"/>
    <property type="chains" value="A=1-759"/>
</dbReference>
<dbReference type="PDB" id="1MMN">
    <property type="method" value="X-ray"/>
    <property type="resolution" value="2.10 A"/>
    <property type="chains" value="A=1-759"/>
</dbReference>
<dbReference type="PDB" id="1MND">
    <property type="method" value="X-ray"/>
    <property type="resolution" value="2.60 A"/>
    <property type="chains" value="A=1-759"/>
</dbReference>
<dbReference type="PDB" id="1MNE">
    <property type="method" value="X-ray"/>
    <property type="resolution" value="2.70 A"/>
    <property type="chains" value="A=1-759"/>
</dbReference>
<dbReference type="PDB" id="1VOM">
    <property type="method" value="X-ray"/>
    <property type="resolution" value="1.90 A"/>
    <property type="chains" value="A=1-759"/>
</dbReference>
<dbReference type="PDB" id="1W9I">
    <property type="method" value="X-ray"/>
    <property type="resolution" value="1.75 A"/>
    <property type="chains" value="A=1-759"/>
</dbReference>
<dbReference type="PDB" id="1W9J">
    <property type="method" value="X-ray"/>
    <property type="resolution" value="2.00 A"/>
    <property type="chains" value="A=1-758"/>
</dbReference>
<dbReference type="PDB" id="1W9K">
    <property type="method" value="X-ray"/>
    <property type="resolution" value="2.05 A"/>
    <property type="chains" value="A=1-759"/>
</dbReference>
<dbReference type="PDB" id="1W9L">
    <property type="method" value="X-ray"/>
    <property type="resolution" value="1.95 A"/>
    <property type="chains" value="A=1-759"/>
</dbReference>
<dbReference type="PDB" id="1YV3">
    <property type="method" value="X-ray"/>
    <property type="resolution" value="2.00 A"/>
    <property type="chains" value="A=1-762"/>
</dbReference>
<dbReference type="PDB" id="2AKA">
    <property type="method" value="X-ray"/>
    <property type="resolution" value="1.90 A"/>
    <property type="chains" value="A=2-765"/>
</dbReference>
<dbReference type="PDB" id="2JHR">
    <property type="method" value="X-ray"/>
    <property type="resolution" value="2.80 A"/>
    <property type="chains" value="A=2-761"/>
</dbReference>
<dbReference type="PDB" id="2JJ9">
    <property type="method" value="X-ray"/>
    <property type="resolution" value="2.30 A"/>
    <property type="chains" value="A=2-761"/>
</dbReference>
<dbReference type="PDB" id="2X9H">
    <property type="method" value="X-ray"/>
    <property type="resolution" value="2.70 A"/>
    <property type="chains" value="A=3-696"/>
</dbReference>
<dbReference type="PDB" id="2XEL">
    <property type="method" value="X-ray"/>
    <property type="resolution" value="2.50 A"/>
    <property type="chains" value="A=2-761"/>
</dbReference>
<dbReference type="PDB" id="2XO8">
    <property type="method" value="X-ray"/>
    <property type="resolution" value="2.40 A"/>
    <property type="chains" value="A=3-761"/>
</dbReference>
<dbReference type="PDB" id="2Y0R">
    <property type="method" value="X-ray"/>
    <property type="resolution" value="2.85 A"/>
    <property type="chains" value="X=2-759"/>
</dbReference>
<dbReference type="PDB" id="2Y8I">
    <property type="method" value="X-ray"/>
    <property type="resolution" value="3.13 A"/>
    <property type="chains" value="X=2-759"/>
</dbReference>
<dbReference type="PDB" id="2Y9E">
    <property type="method" value="X-ray"/>
    <property type="resolution" value="3.40 A"/>
    <property type="chains" value="X=2-759"/>
</dbReference>
<dbReference type="PDB" id="3BZ7">
    <property type="method" value="X-ray"/>
    <property type="resolution" value="2.00 A"/>
    <property type="chains" value="A=2-759"/>
</dbReference>
<dbReference type="PDB" id="3BZ8">
    <property type="method" value="X-ray"/>
    <property type="resolution" value="2.20 A"/>
    <property type="chains" value="A=2-759"/>
</dbReference>
<dbReference type="PDB" id="3BZ9">
    <property type="method" value="X-ray"/>
    <property type="resolution" value="2.10 A"/>
    <property type="chains" value="A=2-759"/>
</dbReference>
<dbReference type="PDB" id="3MJX">
    <property type="method" value="X-ray"/>
    <property type="resolution" value="2.20 A"/>
    <property type="chains" value="A=2-761"/>
</dbReference>
<dbReference type="PDB" id="3MKD">
    <property type="method" value="X-ray"/>
    <property type="resolution" value="2.40 A"/>
    <property type="chains" value="A=2-693"/>
</dbReference>
<dbReference type="PDB" id="3MNQ">
    <property type="method" value="X-ray"/>
    <property type="resolution" value="2.20 A"/>
    <property type="chains" value="A=3-761"/>
</dbReference>
<dbReference type="PDB" id="3MYH">
    <property type="method" value="X-ray"/>
    <property type="resolution" value="2.01 A"/>
    <property type="chains" value="X=2-759"/>
</dbReference>
<dbReference type="PDB" id="3MYK">
    <property type="method" value="X-ray"/>
    <property type="resolution" value="1.84 A"/>
    <property type="chains" value="X=2-759"/>
</dbReference>
<dbReference type="PDB" id="3MYL">
    <property type="method" value="X-ray"/>
    <property type="resolution" value="2.00 A"/>
    <property type="chains" value="X=2-759"/>
</dbReference>
<dbReference type="PDB" id="4AE3">
    <property type="method" value="X-ray"/>
    <property type="resolution" value="2.50 A"/>
    <property type="chains" value="A=2-761"/>
</dbReference>
<dbReference type="PDB" id="4PJK">
    <property type="method" value="X-ray"/>
    <property type="resolution" value="2.15 A"/>
    <property type="chains" value="A=1-761"/>
</dbReference>
<dbReference type="PDB" id="6Z2S">
    <property type="method" value="X-ray"/>
    <property type="resolution" value="3.20 A"/>
    <property type="chains" value="A=2-761"/>
</dbReference>
<dbReference type="PDB" id="6Z7T">
    <property type="method" value="X-ray"/>
    <property type="resolution" value="1.88 A"/>
    <property type="chains" value="A/B=2-761"/>
</dbReference>
<dbReference type="PDB" id="6Z7U">
    <property type="method" value="X-ray"/>
    <property type="resolution" value="2.58 A"/>
    <property type="chains" value="A=2-761"/>
</dbReference>
<dbReference type="PDB" id="7B1A">
    <property type="method" value="X-ray"/>
    <property type="resolution" value="2.60 A"/>
    <property type="chains" value="A=2-761"/>
</dbReference>
<dbReference type="PDBsum" id="1D0X"/>
<dbReference type="PDBsum" id="1D0Y"/>
<dbReference type="PDBsum" id="1D0Z"/>
<dbReference type="PDBsum" id="1D1A"/>
<dbReference type="PDBsum" id="1D1B"/>
<dbReference type="PDBsum" id="1D1C"/>
<dbReference type="PDBsum" id="1FMV"/>
<dbReference type="PDBsum" id="1FMW"/>
<dbReference type="PDBsum" id="1G8X"/>
<dbReference type="PDBsum" id="1JWY"/>
<dbReference type="PDBsum" id="1JX2"/>
<dbReference type="PDBsum" id="1LVK"/>
<dbReference type="PDBsum" id="1MMA"/>
<dbReference type="PDBsum" id="1MMD"/>
<dbReference type="PDBsum" id="1MMG"/>
<dbReference type="PDBsum" id="1MMN"/>
<dbReference type="PDBsum" id="1MND"/>
<dbReference type="PDBsum" id="1MNE"/>
<dbReference type="PDBsum" id="1VOM"/>
<dbReference type="PDBsum" id="1W9I"/>
<dbReference type="PDBsum" id="1W9J"/>
<dbReference type="PDBsum" id="1W9K"/>
<dbReference type="PDBsum" id="1W9L"/>
<dbReference type="PDBsum" id="1YV3"/>
<dbReference type="PDBsum" id="2AKA"/>
<dbReference type="PDBsum" id="2JHR"/>
<dbReference type="PDBsum" id="2JJ9"/>
<dbReference type="PDBsum" id="2X9H"/>
<dbReference type="PDBsum" id="2XEL"/>
<dbReference type="PDBsum" id="2XO8"/>
<dbReference type="PDBsum" id="2Y0R"/>
<dbReference type="PDBsum" id="2Y8I"/>
<dbReference type="PDBsum" id="2Y9E"/>
<dbReference type="PDBsum" id="3BZ7"/>
<dbReference type="PDBsum" id="3BZ8"/>
<dbReference type="PDBsum" id="3BZ9"/>
<dbReference type="PDBsum" id="3MJX"/>
<dbReference type="PDBsum" id="3MKD"/>
<dbReference type="PDBsum" id="3MNQ"/>
<dbReference type="PDBsum" id="3MYH"/>
<dbReference type="PDBsum" id="3MYK"/>
<dbReference type="PDBsum" id="3MYL"/>
<dbReference type="PDBsum" id="4AE3"/>
<dbReference type="PDBsum" id="4PJK"/>
<dbReference type="PDBsum" id="6Z2S"/>
<dbReference type="PDBsum" id="6Z7T"/>
<dbReference type="PDBsum" id="6Z7U"/>
<dbReference type="PDBsum" id="7B1A"/>
<dbReference type="SMR" id="P08799"/>
<dbReference type="DIP" id="DIP-46078N"/>
<dbReference type="FunCoup" id="P08799">
    <property type="interactions" value="98"/>
</dbReference>
<dbReference type="IntAct" id="P08799">
    <property type="interactions" value="2"/>
</dbReference>
<dbReference type="STRING" id="44689.P08799"/>
<dbReference type="BindingDB" id="P08799"/>
<dbReference type="ChEMBL" id="CHEMBL4295703"/>
<dbReference type="iPTMnet" id="P08799"/>
<dbReference type="MetOSite" id="P08799"/>
<dbReference type="PaxDb" id="44689-DDB0191444"/>
<dbReference type="ABCD" id="P08799">
    <property type="antibodies" value="2 sequenced antibodies"/>
</dbReference>
<dbReference type="EnsemblProtists" id="EAL64202">
    <property type="protein sequence ID" value="EAL64202"/>
    <property type="gene ID" value="DDB_G0286355"/>
</dbReference>
<dbReference type="GeneID" id="8625606"/>
<dbReference type="KEGG" id="ddi:DDB_G0286355"/>
<dbReference type="dictyBase" id="DDB_G0286355">
    <property type="gene designation" value="mhcA"/>
</dbReference>
<dbReference type="VEuPathDB" id="AmoebaDB:DDB_G0286355"/>
<dbReference type="eggNOG" id="KOG0161">
    <property type="taxonomic scope" value="Eukaryota"/>
</dbReference>
<dbReference type="HOGENOM" id="CLU_000192_5_3_1"/>
<dbReference type="InParanoid" id="P08799"/>
<dbReference type="OMA" id="DVRFLHK"/>
<dbReference type="PhylomeDB" id="P08799"/>
<dbReference type="BRENDA" id="5.6.1.8">
    <property type="organism ID" value="1939"/>
</dbReference>
<dbReference type="Reactome" id="R-DDI-5627123">
    <property type="pathway name" value="RHO GTPases activate PAKs"/>
</dbReference>
<dbReference type="EvolutionaryTrace" id="P08799"/>
<dbReference type="PRO" id="PR:P08799"/>
<dbReference type="Proteomes" id="UP000002195">
    <property type="component" value="Chromosome 4"/>
</dbReference>
<dbReference type="GO" id="GO:0042641">
    <property type="term" value="C:actomyosin"/>
    <property type="evidence" value="ECO:0000314"/>
    <property type="project" value="dictyBase"/>
</dbReference>
<dbReference type="GO" id="GO:0005826">
    <property type="term" value="C:actomyosin contractile ring"/>
    <property type="evidence" value="ECO:0000314"/>
    <property type="project" value="dictyBase"/>
</dbReference>
<dbReference type="GO" id="GO:0045179">
    <property type="term" value="C:apical cortex"/>
    <property type="evidence" value="ECO:0000314"/>
    <property type="project" value="dictyBase"/>
</dbReference>
<dbReference type="GO" id="GO:0005938">
    <property type="term" value="C:cell cortex"/>
    <property type="evidence" value="ECO:0000314"/>
    <property type="project" value="dictyBase"/>
</dbReference>
<dbReference type="GO" id="GO:0031254">
    <property type="term" value="C:cell trailing edge"/>
    <property type="evidence" value="ECO:0000314"/>
    <property type="project" value="dictyBase"/>
</dbReference>
<dbReference type="GO" id="GO:0032154">
    <property type="term" value="C:cleavage furrow"/>
    <property type="evidence" value="ECO:0000314"/>
    <property type="project" value="dictyBase"/>
</dbReference>
<dbReference type="GO" id="GO:0030864">
    <property type="term" value="C:cortical actin cytoskeleton"/>
    <property type="evidence" value="ECO:0000314"/>
    <property type="project" value="dictyBase"/>
</dbReference>
<dbReference type="GO" id="GO:0005737">
    <property type="term" value="C:cytoplasm"/>
    <property type="evidence" value="ECO:0000318"/>
    <property type="project" value="GO_Central"/>
</dbReference>
<dbReference type="GO" id="GO:0031410">
    <property type="term" value="C:cytoplasmic vesicle"/>
    <property type="evidence" value="ECO:0000314"/>
    <property type="project" value="dictyBase"/>
</dbReference>
<dbReference type="GO" id="GO:0005856">
    <property type="term" value="C:cytoskeleton"/>
    <property type="evidence" value="ECO:0000314"/>
    <property type="project" value="dictyBase"/>
</dbReference>
<dbReference type="GO" id="GO:0005829">
    <property type="term" value="C:cytosol"/>
    <property type="evidence" value="ECO:0000314"/>
    <property type="project" value="dictyBase"/>
</dbReference>
<dbReference type="GO" id="GO:0032009">
    <property type="term" value="C:early phagosome"/>
    <property type="evidence" value="ECO:0000314"/>
    <property type="project" value="dictyBase"/>
</dbReference>
<dbReference type="GO" id="GO:1990753">
    <property type="term" value="C:equatorial cell cortex"/>
    <property type="evidence" value="ECO:0000314"/>
    <property type="project" value="dictyBase"/>
</dbReference>
<dbReference type="GO" id="GO:0031012">
    <property type="term" value="C:extracellular matrix"/>
    <property type="evidence" value="ECO:0007005"/>
    <property type="project" value="dictyBase"/>
</dbReference>
<dbReference type="GO" id="GO:0032982">
    <property type="term" value="C:myosin filament"/>
    <property type="evidence" value="ECO:0000314"/>
    <property type="project" value="dictyBase"/>
</dbReference>
<dbReference type="GO" id="GO:0016460">
    <property type="term" value="C:myosin II complex"/>
    <property type="evidence" value="ECO:0000314"/>
    <property type="project" value="dictyBase"/>
</dbReference>
<dbReference type="GO" id="GO:0140220">
    <property type="term" value="C:pathogen-containing vacuole"/>
    <property type="evidence" value="ECO:0007005"/>
    <property type="project" value="dictyBase"/>
</dbReference>
<dbReference type="GO" id="GO:0097204">
    <property type="term" value="C:phagocytic cup base"/>
    <property type="evidence" value="ECO:0000314"/>
    <property type="project" value="dictyBase"/>
</dbReference>
<dbReference type="GO" id="GO:0031143">
    <property type="term" value="C:pseudopodium"/>
    <property type="evidence" value="ECO:0000314"/>
    <property type="project" value="dictyBase"/>
</dbReference>
<dbReference type="GO" id="GO:0001931">
    <property type="term" value="C:uropod"/>
    <property type="evidence" value="ECO:0000314"/>
    <property type="project" value="dictyBase"/>
</dbReference>
<dbReference type="GO" id="GO:0071889">
    <property type="term" value="F:14-3-3 protein binding"/>
    <property type="evidence" value="ECO:0000353"/>
    <property type="project" value="dictyBase"/>
</dbReference>
<dbReference type="GO" id="GO:0051015">
    <property type="term" value="F:actin filament binding"/>
    <property type="evidence" value="ECO:0000314"/>
    <property type="project" value="dictyBase"/>
</dbReference>
<dbReference type="GO" id="GO:0030554">
    <property type="term" value="F:adenyl nucleotide binding"/>
    <property type="evidence" value="ECO:0000314"/>
    <property type="project" value="dictyBase"/>
</dbReference>
<dbReference type="GO" id="GO:0005524">
    <property type="term" value="F:ATP binding"/>
    <property type="evidence" value="ECO:0000314"/>
    <property type="project" value="dictyBase"/>
</dbReference>
<dbReference type="GO" id="GO:0030899">
    <property type="term" value="F:calcium-dependent ATPase activity"/>
    <property type="evidence" value="ECO:0000314"/>
    <property type="project" value="dictyBase"/>
</dbReference>
<dbReference type="GO" id="GO:0005516">
    <property type="term" value="F:calmodulin binding"/>
    <property type="evidence" value="ECO:0007669"/>
    <property type="project" value="UniProtKB-KW"/>
</dbReference>
<dbReference type="GO" id="GO:0003774">
    <property type="term" value="F:cytoskeletal motor activity"/>
    <property type="evidence" value="ECO:0000314"/>
    <property type="project" value="dictyBase"/>
</dbReference>
<dbReference type="GO" id="GO:0042802">
    <property type="term" value="F:identical protein binding"/>
    <property type="evidence" value="ECO:0000353"/>
    <property type="project" value="IntAct"/>
</dbReference>
<dbReference type="GO" id="GO:0000146">
    <property type="term" value="F:microfilament motor activity"/>
    <property type="evidence" value="ECO:0000314"/>
    <property type="project" value="dictyBase"/>
</dbReference>
<dbReference type="GO" id="GO:0033275">
    <property type="term" value="P:actin-myosin filament sliding"/>
    <property type="evidence" value="ECO:0000314"/>
    <property type="project" value="dictyBase"/>
</dbReference>
<dbReference type="GO" id="GO:0031152">
    <property type="term" value="P:aggregation involved in sorocarp development"/>
    <property type="evidence" value="ECO:0000270"/>
    <property type="project" value="dictyBase"/>
</dbReference>
<dbReference type="GO" id="GO:0032060">
    <property type="term" value="P:bleb assembly"/>
    <property type="evidence" value="ECO:0000315"/>
    <property type="project" value="dictyBase"/>
</dbReference>
<dbReference type="GO" id="GO:0048870">
    <property type="term" value="P:cell motility"/>
    <property type="evidence" value="ECO:0000315"/>
    <property type="project" value="dictyBase"/>
</dbReference>
<dbReference type="GO" id="GO:0006935">
    <property type="term" value="P:chemotaxis"/>
    <property type="evidence" value="ECO:0000315"/>
    <property type="project" value="dictyBase"/>
</dbReference>
<dbReference type="GO" id="GO:0030038">
    <property type="term" value="P:contractile actin filament bundle assembly"/>
    <property type="evidence" value="ECO:0000315"/>
    <property type="project" value="dictyBase"/>
</dbReference>
<dbReference type="GO" id="GO:0033298">
    <property type="term" value="P:contractile vacuole organization"/>
    <property type="evidence" value="ECO:0000315"/>
    <property type="project" value="dictyBase"/>
</dbReference>
<dbReference type="GO" id="GO:0030866">
    <property type="term" value="P:cortical actin cytoskeleton organization"/>
    <property type="evidence" value="ECO:0000314"/>
    <property type="project" value="dictyBase"/>
</dbReference>
<dbReference type="GO" id="GO:0031154">
    <property type="term" value="P:culmination involved in sorocarp development"/>
    <property type="evidence" value="ECO:0000315"/>
    <property type="project" value="dictyBase"/>
</dbReference>
<dbReference type="GO" id="GO:0060328">
    <property type="term" value="P:cytoplasmic actin-based contraction involved in forward cell motility"/>
    <property type="evidence" value="ECO:0000315"/>
    <property type="project" value="dictyBase"/>
</dbReference>
<dbReference type="GO" id="GO:0050982">
    <property type="term" value="P:detection of mechanical stimulus"/>
    <property type="evidence" value="ECO:0000315"/>
    <property type="project" value="dictyBase"/>
</dbReference>
<dbReference type="GO" id="GO:0046847">
    <property type="term" value="P:filopodium assembly"/>
    <property type="evidence" value="ECO:0000315"/>
    <property type="project" value="dictyBase"/>
</dbReference>
<dbReference type="GO" id="GO:0006971">
    <property type="term" value="P:hypotonic response"/>
    <property type="evidence" value="ECO:0000315"/>
    <property type="project" value="dictyBase"/>
</dbReference>
<dbReference type="GO" id="GO:0000281">
    <property type="term" value="P:mitotic cytokinesis"/>
    <property type="evidence" value="ECO:0000315"/>
    <property type="project" value="dictyBase"/>
</dbReference>
<dbReference type="GO" id="GO:0031034">
    <property type="term" value="P:myosin filament assembly"/>
    <property type="evidence" value="ECO:0000314"/>
    <property type="project" value="dictyBase"/>
</dbReference>
<dbReference type="GO" id="GO:0030837">
    <property type="term" value="P:negative regulation of actin filament polymerization"/>
    <property type="evidence" value="ECO:0000315"/>
    <property type="project" value="dictyBase"/>
</dbReference>
<dbReference type="GO" id="GO:0008104">
    <property type="term" value="P:protein localization"/>
    <property type="evidence" value="ECO:0000315"/>
    <property type="project" value="dictyBase"/>
</dbReference>
<dbReference type="GO" id="GO:0031270">
    <property type="term" value="P:pseudopodium retraction"/>
    <property type="evidence" value="ECO:0000315"/>
    <property type="project" value="dictyBase"/>
</dbReference>
<dbReference type="GO" id="GO:0008360">
    <property type="term" value="P:regulation of cell shape"/>
    <property type="evidence" value="ECO:0000315"/>
    <property type="project" value="dictyBase"/>
</dbReference>
<dbReference type="GO" id="GO:0051591">
    <property type="term" value="P:response to cAMP"/>
    <property type="evidence" value="ECO:0000314"/>
    <property type="project" value="dictyBase"/>
</dbReference>
<dbReference type="GO" id="GO:1903013">
    <property type="term" value="P:response to differentiation-inducing factor 1"/>
    <property type="evidence" value="ECO:0007005"/>
    <property type="project" value="dictyBase"/>
</dbReference>
<dbReference type="GO" id="GO:0042542">
    <property type="term" value="P:response to hydrogen peroxide"/>
    <property type="evidence" value="ECO:0000314"/>
    <property type="project" value="dictyBase"/>
</dbReference>
<dbReference type="GO" id="GO:0009612">
    <property type="term" value="P:response to mechanical stimulus"/>
    <property type="evidence" value="ECO:0000315"/>
    <property type="project" value="dictyBase"/>
</dbReference>
<dbReference type="GO" id="GO:0006930">
    <property type="term" value="P:substrate-dependent cell migration, cell extension"/>
    <property type="evidence" value="ECO:0000314"/>
    <property type="project" value="dictyBase"/>
</dbReference>
<dbReference type="GO" id="GO:0034461">
    <property type="term" value="P:uropod retraction"/>
    <property type="evidence" value="ECO:0000315"/>
    <property type="project" value="dictyBase"/>
</dbReference>
<dbReference type="CDD" id="cd01377">
    <property type="entry name" value="MYSc_class_II"/>
    <property type="match status" value="1"/>
</dbReference>
<dbReference type="FunFam" id="1.10.10.820:FF:000001">
    <property type="entry name" value="Myosin heavy chain"/>
    <property type="match status" value="1"/>
</dbReference>
<dbReference type="FunFam" id="1.20.5.340:FF:000089">
    <property type="entry name" value="Myosin-2 heavy chain"/>
    <property type="match status" value="1"/>
</dbReference>
<dbReference type="FunFam" id="3.40.850.10:FF:000101">
    <property type="entry name" value="Slow myosin heavy chain 2"/>
    <property type="match status" value="1"/>
</dbReference>
<dbReference type="Gene3D" id="1.10.10.820">
    <property type="match status" value="1"/>
</dbReference>
<dbReference type="Gene3D" id="1.20.5.340">
    <property type="match status" value="6"/>
</dbReference>
<dbReference type="Gene3D" id="1.20.58.530">
    <property type="match status" value="1"/>
</dbReference>
<dbReference type="Gene3D" id="3.30.70.1590">
    <property type="match status" value="1"/>
</dbReference>
<dbReference type="Gene3D" id="3.40.850.10">
    <property type="entry name" value="Kinesin motor domain"/>
    <property type="match status" value="1"/>
</dbReference>
<dbReference type="Gene3D" id="2.30.30.360">
    <property type="entry name" value="Myosin S1 fragment, N-terminal"/>
    <property type="match status" value="1"/>
</dbReference>
<dbReference type="Gene3D" id="1.20.120.720">
    <property type="entry name" value="Myosin VI head, motor domain, U50 subdomain"/>
    <property type="match status" value="1"/>
</dbReference>
<dbReference type="Gene3D" id="4.10.270.10">
    <property type="entry name" value="Myosin, subunit A"/>
    <property type="match status" value="1"/>
</dbReference>
<dbReference type="InterPro" id="IPR036961">
    <property type="entry name" value="Kinesin_motor_dom_sf"/>
</dbReference>
<dbReference type="InterPro" id="IPR001609">
    <property type="entry name" value="Myosin_head_motor_dom-like"/>
</dbReference>
<dbReference type="InterPro" id="IPR004009">
    <property type="entry name" value="Myosin_N"/>
</dbReference>
<dbReference type="InterPro" id="IPR008989">
    <property type="entry name" value="Myosin_S1_N"/>
</dbReference>
<dbReference type="InterPro" id="IPR002928">
    <property type="entry name" value="Myosin_tail"/>
</dbReference>
<dbReference type="InterPro" id="IPR027417">
    <property type="entry name" value="P-loop_NTPase"/>
</dbReference>
<dbReference type="PANTHER" id="PTHR13140">
    <property type="entry name" value="MYOSIN"/>
    <property type="match status" value="1"/>
</dbReference>
<dbReference type="PANTHER" id="PTHR13140:SF857">
    <property type="entry name" value="MYOSIN-11"/>
    <property type="match status" value="1"/>
</dbReference>
<dbReference type="Pfam" id="PF00063">
    <property type="entry name" value="Myosin_head"/>
    <property type="match status" value="1"/>
</dbReference>
<dbReference type="Pfam" id="PF02736">
    <property type="entry name" value="Myosin_N"/>
    <property type="match status" value="1"/>
</dbReference>
<dbReference type="Pfam" id="PF01576">
    <property type="entry name" value="Myosin_tail_1"/>
    <property type="match status" value="2"/>
</dbReference>
<dbReference type="PRINTS" id="PR00193">
    <property type="entry name" value="MYOSINHEAVY"/>
</dbReference>
<dbReference type="SMART" id="SM00242">
    <property type="entry name" value="MYSc"/>
    <property type="match status" value="1"/>
</dbReference>
<dbReference type="SUPFAM" id="SSF90257">
    <property type="entry name" value="Myosin rod fragments"/>
    <property type="match status" value="11"/>
</dbReference>
<dbReference type="SUPFAM" id="SSF50084">
    <property type="entry name" value="Myosin S1 fragment, N-terminal domain"/>
    <property type="match status" value="1"/>
</dbReference>
<dbReference type="SUPFAM" id="SSF52540">
    <property type="entry name" value="P-loop containing nucleoside triphosphate hydrolases"/>
    <property type="match status" value="1"/>
</dbReference>
<dbReference type="PROSITE" id="PS50096">
    <property type="entry name" value="IQ"/>
    <property type="match status" value="1"/>
</dbReference>
<dbReference type="PROSITE" id="PS51456">
    <property type="entry name" value="MYOSIN_MOTOR"/>
    <property type="match status" value="1"/>
</dbReference>
<dbReference type="PROSITE" id="PS51844">
    <property type="entry name" value="SH3_LIKE"/>
    <property type="match status" value="1"/>
</dbReference>
<accession>P08799</accession>
<accession>Q54LU0</accession>
<sequence>MNPIHDRTSDYHKYLKVKQGDSDLFKLTVSDKRYIWYNPDPKERDSYECGEIVSETSDSFTFKTVDGQDRQVKKDDANQRNPIKFDGVEDMSELSYLNEPAVFHNLRVRYNQDLIYTYSGLFLVAVNPFKRIPIYTQEMVDIFKGRRRNEVAPHIFAISDVAYRSMLDDRQNQSLLITGESGAGKTENTKKVIQYLASVAGRNQANGSGVLEQQILQANPILEAFGNAKTTRNNNSSRFGKFIEIQFNSAGFISGASIQSYLLEKSRVVFQSETERNYHIFYQLLAGATAEEKKALHLAGPESFNYLNQSGCVDIKGVSDSEEFKITRQAMDIVGFSQEEQMSIFKIIAGILHLGNIKFEKGAGEGAVLKDKTALNAASTVFGVNPSVLEKALMEPRILAGRDLVAQHLNVEKSSSSRDALVKALYGRLFLWLVKKINNVLCQERKAYFIGVLDISGFEIFKVNSFEQLCINYTNEKLQQFFNHHMFKLEQEEYLKEKINWTFIDFGLDSQATIDLIDGRQPPGILALLDEQSVFPNATDNTLITKLHSHFSKKNAKYEEPRFSKTEFGVTHYAGQVMYEIQDWLEKNKDPLQQDLELCFKDSSDNVVTKLFNDPNIASRAKKGANFITVAAQYKEQLASLMATLETTNPHFVRCIIPNNKQLPAKLEDKVVLDQLRCNGVLEGIRITRKGFPNRIIYADFVKRYYLLAPNVPRDAEDSQKATDAVLKHLNIDPEQYRFGITKIFFRAGQLARIEEAREQRISEIIKAIQAATRGWIARKVYKQAREHTVAARIIQQNLRAYIDFKSWPWWKLFSKARPLLKRRNFEKEIKEKEREILELKSNLTDSTTQKDKLEKSLKDTESNVLDLQRQLKAEKETLKAMYDSKDALEAQKRELEIRVEDMESELDEKKLALENLQNQKRSVEEKVRDLEEELQEEQKLRNTLEKLKKKYEEELEEMKRVNDGQSDTISRLEKIKDELQKEVEELTESFSEESKDKGVLEKTRVRLQSELDDLTVRLDSETKDKSELLRQKKKLEEELKQVQEALAAETAAKLAQEAANKKLQGEYTELNEKFNSEVTARSNVEKSKKTLESQLVAVNNELDEEKKNRDALEKKKKALDAMLEEMKDQLESTGGEKKSLYDLKVKQESDMEALRNQISELQSTIAKLEKIKSTLEGEVARLQGELEAEQLAKSNVEKQKKKVELDLEDKSAQLAEETAAKQALDKLKKKLEQELSEVQTQLSEANNKNVNSDSTNKHLETSFNNLKLELEAEQKAKQALEKKRLGLESELKHVNEQLEEEKKQKESNEKRKVDLEKEVSELKDQIEEEVASKKAVTEAKNKKESELDEIKRQYADVVSSRDKSVEQLKTLQAKNEELRNTAEEAEGQLDRAERSKKKAEFDLEEAVKNLEEETAKKVKAEKAMKKAETDYRSTKSELDDAKNVSSEQYVQIKRLNEELSELRSVLEEADERCNSAIKAKKTAESALESLKDEIDAANNAKAKAERKSKELEVRVAELEESLEDKSGTVNVEFIRKKDAEIDDLRARLDRETESRIKSDEDKKNTRKQFADLEAKVEEAQREVVTIDRLKKKLESDIIDLSTQLDTETKSRIKIEKSKKKLEQTLAERRAAEEGSSKAADEEIRKQVWQEVDELRAQLDSERAALNASEKKIKSLVAEVDEVKEQLEDEILAKDKLVKAKRALEVELEEVRDQLEEEEDSRSELEDSKRRLTTEVEDIKKKYDAEVEQNTKLDEAKKKLTDDVDTLKKQLEDEKKKLNESERAKKRLESENEDFLAKLDAEVKNRSRAEKDRKKYEKDLKDTKYKLNDEAATKTQTEIGAAKLEDQIDELRSKLEQEQAKATQADKSKKTLEGEIDNLRAQIEDEGKIKMRLEKEKRALEGELEELRETVEEAEDSKSEAEQSKRLVELELEDARRNLQKEIDAKEIAEDAKSNLQREIVEAKGRLEEESIARTNSDRSRKRLEAEIDALTAQVDAEQKAKNQQIKENKKIETELKEYRKKFGESEKTKTKEFLVVEKLETDYKRAKKEAADEQQQRLTVENDLRKHLSEISLLKDAIDKLQRDHDKTKRELETETASKIEMQRKMADFFGGFKA</sequence>
<feature type="chain" id="PRO_0000123373" description="Myosin-2 heavy chain">
    <location>
        <begin position="1"/>
        <end position="2116"/>
    </location>
</feature>
<feature type="domain" description="Myosin N-terminal SH3-like" evidence="4">
    <location>
        <begin position="30"/>
        <end position="82"/>
    </location>
</feature>
<feature type="domain" description="Myosin motor" evidence="3">
    <location>
        <begin position="86"/>
        <end position="759"/>
    </location>
</feature>
<feature type="domain" description="IQ" evidence="2">
    <location>
        <begin position="762"/>
        <end position="791"/>
    </location>
</feature>
<feature type="region of interest" description="Actin-binding">
    <location>
        <begin position="638"/>
        <end position="660"/>
    </location>
</feature>
<feature type="region of interest" description="Actin-binding">
    <location>
        <begin position="738"/>
        <end position="752"/>
    </location>
</feature>
<feature type="region of interest" description="Disordered" evidence="5">
    <location>
        <begin position="1295"/>
        <end position="1314"/>
    </location>
</feature>
<feature type="region of interest" description="Disordered" evidence="5">
    <location>
        <begin position="1363"/>
        <end position="1399"/>
    </location>
</feature>
<feature type="region of interest" description="Disordered" evidence="5">
    <location>
        <begin position="1415"/>
        <end position="1444"/>
    </location>
</feature>
<feature type="region of interest" description="Disordered" evidence="5">
    <location>
        <begin position="1711"/>
        <end position="1731"/>
    </location>
</feature>
<feature type="region of interest" description="Disordered" evidence="5">
    <location>
        <begin position="1771"/>
        <end position="1791"/>
    </location>
</feature>
<feature type="region of interest" description="Disordered" evidence="5">
    <location>
        <begin position="1805"/>
        <end position="1844"/>
    </location>
</feature>
<feature type="coiled-coil region" evidence="1">
    <location>
        <begin position="817"/>
        <end position="2116"/>
    </location>
</feature>
<feature type="compositionally biased region" description="Basic and acidic residues" evidence="5">
    <location>
        <begin position="1375"/>
        <end position="1399"/>
    </location>
</feature>
<feature type="compositionally biased region" description="Basic and acidic residues" evidence="5">
    <location>
        <begin position="1415"/>
        <end position="1443"/>
    </location>
</feature>
<feature type="compositionally biased region" description="Basic and acidic residues" evidence="5">
    <location>
        <begin position="1722"/>
        <end position="1731"/>
    </location>
</feature>
<feature type="compositionally biased region" description="Basic and acidic residues" evidence="5">
    <location>
        <begin position="1805"/>
        <end position="1832"/>
    </location>
</feature>
<feature type="binding site">
    <location>
        <begin position="179"/>
        <end position="186"/>
    </location>
    <ligand>
        <name>ATP</name>
        <dbReference type="ChEBI" id="CHEBI:30616"/>
    </ligand>
</feature>
<feature type="modified residue" description="N6,N6-dimethyllysine" evidence="1">
    <location>
        <position position="130"/>
    </location>
</feature>
<feature type="modified residue" description="Phosphothreonine; by MHCK" evidence="6 7">
    <location>
        <position position="1823"/>
    </location>
</feature>
<feature type="modified residue" description="Phosphothreonine; by MHCK" evidence="6 7">
    <location>
        <position position="1833"/>
    </location>
</feature>
<feature type="modified residue" description="Phosphothreonine; by MHCK" evidence="6 7">
    <location>
        <position position="2029"/>
    </location>
</feature>
<feature type="sequence conflict" description="In Ref. 1; AAA33227." evidence="8" ref="1">
    <original>S</original>
    <variation>N</variation>
    <location>
        <position position="249"/>
    </location>
</feature>
<feature type="sequence conflict" description="In Ref. 1; AAA33227." evidence="8" ref="1">
    <original>C</original>
    <variation>Y</variation>
    <location>
        <position position="312"/>
    </location>
</feature>
<feature type="turn" evidence="14">
    <location>
        <begin position="3"/>
        <end position="5"/>
    </location>
</feature>
<feature type="strand" evidence="19">
    <location>
        <begin position="6"/>
        <end position="9"/>
    </location>
</feature>
<feature type="helix" evidence="14">
    <location>
        <begin position="10"/>
        <end position="15"/>
    </location>
</feature>
<feature type="helix" evidence="22">
    <location>
        <begin position="22"/>
        <end position="28"/>
    </location>
</feature>
<feature type="helix" evidence="24">
    <location>
        <begin position="29"/>
        <end position="31"/>
    </location>
</feature>
<feature type="strand" evidence="14">
    <location>
        <begin position="34"/>
        <end position="37"/>
    </location>
</feature>
<feature type="strand" evidence="10">
    <location>
        <begin position="39"/>
        <end position="43"/>
    </location>
</feature>
<feature type="strand" evidence="20">
    <location>
        <begin position="44"/>
        <end position="46"/>
    </location>
</feature>
<feature type="strand" evidence="14">
    <location>
        <begin position="48"/>
        <end position="55"/>
    </location>
</feature>
<feature type="strand" evidence="14">
    <location>
        <begin position="57"/>
        <end position="63"/>
    </location>
</feature>
<feature type="strand" evidence="11">
    <location>
        <begin position="65"/>
        <end position="67"/>
    </location>
</feature>
<feature type="strand" evidence="14">
    <location>
        <begin position="69"/>
        <end position="73"/>
    </location>
</feature>
<feature type="turn" evidence="14">
    <location>
        <begin position="74"/>
        <end position="76"/>
    </location>
</feature>
<feature type="strand" evidence="19">
    <location>
        <begin position="77"/>
        <end position="79"/>
    </location>
</feature>
<feature type="helix" evidence="14">
    <location>
        <begin position="83"/>
        <end position="85"/>
    </location>
</feature>
<feature type="helix" evidence="14">
    <location>
        <begin position="91"/>
        <end position="93"/>
    </location>
</feature>
<feature type="helix" evidence="14">
    <location>
        <begin position="99"/>
        <end position="111"/>
    </location>
</feature>
<feature type="strand" evidence="14">
    <location>
        <begin position="116"/>
        <end position="119"/>
    </location>
</feature>
<feature type="strand" evidence="14">
    <location>
        <begin position="122"/>
        <end position="126"/>
    </location>
</feature>
<feature type="helix" evidence="14">
    <location>
        <begin position="137"/>
        <end position="143"/>
    </location>
</feature>
<feature type="helix" evidence="14">
    <location>
        <begin position="148"/>
        <end position="150"/>
    </location>
</feature>
<feature type="helix" evidence="14">
    <location>
        <begin position="155"/>
        <end position="169"/>
    </location>
</feature>
<feature type="strand" evidence="14">
    <location>
        <begin position="173"/>
        <end position="178"/>
    </location>
</feature>
<feature type="helix" evidence="14">
    <location>
        <begin position="185"/>
        <end position="200"/>
    </location>
</feature>
<feature type="strand" evidence="21">
    <location>
        <begin position="204"/>
        <end position="206"/>
    </location>
</feature>
<feature type="helix" evidence="21">
    <location>
        <begin position="207"/>
        <end position="209"/>
    </location>
</feature>
<feature type="helix" evidence="14">
    <location>
        <begin position="210"/>
        <end position="226"/>
    </location>
</feature>
<feature type="strand" evidence="15">
    <location>
        <begin position="227"/>
        <end position="230"/>
    </location>
</feature>
<feature type="strand" evidence="14">
    <location>
        <begin position="236"/>
        <end position="247"/>
    </location>
</feature>
<feature type="strand" evidence="17">
    <location>
        <begin position="249"/>
        <end position="251"/>
    </location>
</feature>
<feature type="strand" evidence="14">
    <location>
        <begin position="253"/>
        <end position="261"/>
    </location>
</feature>
<feature type="helix" evidence="14">
    <location>
        <begin position="265"/>
        <end position="268"/>
    </location>
</feature>
<feature type="helix" evidence="14">
    <location>
        <begin position="279"/>
        <end position="287"/>
    </location>
</feature>
<feature type="helix" evidence="14">
    <location>
        <begin position="290"/>
        <end position="296"/>
    </location>
</feature>
<feature type="helix" evidence="14">
    <location>
        <begin position="301"/>
        <end position="303"/>
    </location>
</feature>
<feature type="turn" evidence="14">
    <location>
        <begin position="305"/>
        <end position="307"/>
    </location>
</feature>
<feature type="strand" evidence="14">
    <location>
        <begin position="308"/>
        <end position="311"/>
    </location>
</feature>
<feature type="helix" evidence="14">
    <location>
        <begin position="320"/>
        <end position="334"/>
    </location>
</feature>
<feature type="helix" evidence="14">
    <location>
        <begin position="338"/>
        <end position="355"/>
    </location>
</feature>
<feature type="strand" evidence="13">
    <location>
        <begin position="359"/>
        <end position="361"/>
    </location>
</feature>
<feature type="strand" evidence="14">
    <location>
        <begin position="363"/>
        <end position="368"/>
    </location>
</feature>
<feature type="helix" evidence="14">
    <location>
        <begin position="373"/>
        <end position="382"/>
    </location>
</feature>
<feature type="helix" evidence="14">
    <location>
        <begin position="386"/>
        <end position="394"/>
    </location>
</feature>
<feature type="strand" evidence="14">
    <location>
        <begin position="397"/>
        <end position="400"/>
    </location>
</feature>
<feature type="strand" evidence="14">
    <location>
        <begin position="403"/>
        <end position="406"/>
    </location>
</feature>
<feature type="helix" evidence="14">
    <location>
        <begin position="411"/>
        <end position="441"/>
    </location>
</feature>
<feature type="strand" evidence="14">
    <location>
        <begin position="447"/>
        <end position="454"/>
    </location>
</feature>
<feature type="strand" evidence="24">
    <location>
        <begin position="462"/>
        <end position="464"/>
    </location>
</feature>
<feature type="helix" evidence="14">
    <location>
        <begin position="466"/>
        <end position="495"/>
    </location>
</feature>
<feature type="turn" evidence="14">
    <location>
        <begin position="496"/>
        <end position="498"/>
    </location>
</feature>
<feature type="helix" evidence="14">
    <location>
        <begin position="506"/>
        <end position="510"/>
    </location>
</feature>
<feature type="helix" evidence="14">
    <location>
        <begin position="511"/>
        <end position="518"/>
    </location>
</feature>
<feature type="turn" evidence="14">
    <location>
        <begin position="520"/>
        <end position="523"/>
    </location>
</feature>
<feature type="helix" evidence="14">
    <location>
        <begin position="525"/>
        <end position="533"/>
    </location>
</feature>
<feature type="strand" evidence="14">
    <location>
        <begin position="534"/>
        <end position="537"/>
    </location>
</feature>
<feature type="helix" evidence="14">
    <location>
        <begin position="540"/>
        <end position="551"/>
    </location>
</feature>
<feature type="turn" evidence="14">
    <location>
        <begin position="552"/>
        <end position="554"/>
    </location>
</feature>
<feature type="strand" evidence="20">
    <location>
        <begin position="556"/>
        <end position="559"/>
    </location>
</feature>
<feature type="strand" evidence="14">
    <location>
        <begin position="565"/>
        <end position="572"/>
    </location>
</feature>
<feature type="strand" evidence="14">
    <location>
        <begin position="575"/>
        <end position="580"/>
    </location>
</feature>
<feature type="helix" evidence="14">
    <location>
        <begin position="584"/>
        <end position="589"/>
    </location>
</feature>
<feature type="helix" evidence="14">
    <location>
        <begin position="594"/>
        <end position="601"/>
    </location>
</feature>
<feature type="helix" evidence="14">
    <location>
        <begin position="608"/>
        <end position="613"/>
    </location>
</feature>
<feature type="helix" evidence="14">
    <location>
        <begin position="615"/>
        <end position="618"/>
    </location>
</feature>
<feature type="strand" evidence="16">
    <location>
        <begin position="624"/>
        <end position="626"/>
    </location>
</feature>
<feature type="helix" evidence="14">
    <location>
        <begin position="630"/>
        <end position="646"/>
    </location>
</feature>
<feature type="strand" evidence="14">
    <location>
        <begin position="648"/>
        <end position="656"/>
    </location>
</feature>
<feature type="helix" evidence="14">
    <location>
        <begin position="669"/>
        <end position="678"/>
    </location>
</feature>
<feature type="helix" evidence="14">
    <location>
        <begin position="681"/>
        <end position="687"/>
    </location>
</feature>
<feature type="helix" evidence="18">
    <location>
        <begin position="688"/>
        <end position="690"/>
    </location>
</feature>
<feature type="strand" evidence="14">
    <location>
        <begin position="694"/>
        <end position="698"/>
    </location>
</feature>
<feature type="helix" evidence="21">
    <location>
        <begin position="699"/>
        <end position="701"/>
    </location>
</feature>
<feature type="turn" evidence="23">
    <location>
        <begin position="702"/>
        <end position="704"/>
    </location>
</feature>
<feature type="helix" evidence="24">
    <location>
        <begin position="706"/>
        <end position="708"/>
    </location>
</feature>
<feature type="strand" evidence="9">
    <location>
        <begin position="709"/>
        <end position="711"/>
    </location>
</feature>
<feature type="helix" evidence="24">
    <location>
        <begin position="719"/>
        <end position="729"/>
    </location>
</feature>
<feature type="strand" evidence="20">
    <location>
        <begin position="730"/>
        <end position="732"/>
    </location>
</feature>
<feature type="helix" evidence="24">
    <location>
        <begin position="734"/>
        <end position="736"/>
    </location>
</feature>
<feature type="strand" evidence="22">
    <location>
        <begin position="737"/>
        <end position="739"/>
    </location>
</feature>
<feature type="strand" evidence="14">
    <location>
        <begin position="741"/>
        <end position="746"/>
    </location>
</feature>
<feature type="turn" evidence="14">
    <location>
        <begin position="748"/>
        <end position="752"/>
    </location>
</feature>
<feature type="strand" evidence="12">
    <location>
        <begin position="754"/>
        <end position="756"/>
    </location>
</feature>
<feature type="strand" evidence="17">
    <location>
        <begin position="757"/>
        <end position="760"/>
    </location>
</feature>
<protein>
    <recommendedName>
        <fullName>Myosin-2 heavy chain</fullName>
    </recommendedName>
    <alternativeName>
        <fullName>Myosin II heavy chain</fullName>
    </alternativeName>
</protein>
<proteinExistence type="evidence at protein level"/>
<comment type="function">
    <text>Myosin is a protein that binds to actin and has ATPase activity that is activated by actin.</text>
</comment>
<comment type="subunit">
    <text>Myosin-2 heavy chain is two-headed. It self-assembles into filaments. Hexamer of 2 heavy chain subunits (MHC), 2 alkali light chain subunits (MLC) and 2 regulatory light chain subunits (MLC-2). Associates with elmoA.</text>
</comment>
<comment type="interaction">
    <interactant intactId="EBI-2928504">
        <id>P08799</id>
    </interactant>
    <interactant intactId="EBI-2928498">
        <id>Q54YW1</id>
        <label>elmoA</label>
    </interactant>
    <organismsDiffer>false</organismsDiffer>
    <experiments>2</experiments>
</comment>
<comment type="interaction">
    <interactant intactId="EBI-2928504">
        <id>P08799</id>
    </interactant>
    <interactant intactId="EBI-2928504">
        <id>P08799</id>
        <label>mhcA</label>
    </interactant>
    <organismsDiffer>false</organismsDiffer>
    <experiments>4</experiments>
</comment>
<comment type="interaction">
    <interactant intactId="EBI-2928504">
        <id>P08799</id>
    </interactant>
    <interactant intactId="EBI-367540">
        <id>P68135</id>
        <label>ACTA1</label>
    </interactant>
    <organismsDiffer>true</organismsDiffer>
    <experiments>8</experiments>
</comment>
<comment type="subcellular location">
    <subcellularLocation>
        <location>Cytoplasm</location>
        <location>Cell cortex</location>
    </subcellularLocation>
    <text>Highest concentration in the posterior cell cortex.</text>
</comment>
<comment type="domain">
    <text evidence="8">Limited proteolysis of myosin heavy chain produces 1 light meromyosin (LMM) and 1 heavy meromyosin (HMM). HMM can be further cleaved into 2 globular subfragments (S1) and 1 rod-shaped subfragment (S2).</text>
</comment>
<comment type="domain">
    <text>The rodlike tail sequence is highly repetitive, showing cycles of a 28-residue repeat pattern composed of 4 heptapeptides, characteristic for alpha-helical coiled coils.</text>
</comment>
<comment type="PTM">
    <text evidence="6 7">Phosphorylation inhibits thick filament formation and reduces the actin-activated ATPase activity.</text>
</comment>
<comment type="miscellaneous">
    <text>Dictyostelium myosin-2 has no K(2)EDTA ATPase activity, perhaps correlated with the absence of a Cys at the SH-1 position (688).</text>
</comment>
<comment type="similarity">
    <text evidence="8">Belongs to the TRAFAC class myosin-kinesin ATPase superfamily. Myosin family.</text>
</comment>
<keyword id="KW-0002">3D-structure</keyword>
<keyword id="KW-0009">Actin-binding</keyword>
<keyword id="KW-0067">ATP-binding</keyword>
<keyword id="KW-0112">Calmodulin-binding</keyword>
<keyword id="KW-0175">Coiled coil</keyword>
<keyword id="KW-0963">Cytoplasm</keyword>
<keyword id="KW-0488">Methylation</keyword>
<keyword id="KW-0505">Motor protein</keyword>
<keyword id="KW-0518">Myosin</keyword>
<keyword id="KW-0547">Nucleotide-binding</keyword>
<keyword id="KW-0597">Phosphoprotein</keyword>
<keyword id="KW-1185">Reference proteome</keyword>
<organism>
    <name type="scientific">Dictyostelium discoideum</name>
    <name type="common">Social amoeba</name>
    <dbReference type="NCBI Taxonomy" id="44689"/>
    <lineage>
        <taxon>Eukaryota</taxon>
        <taxon>Amoebozoa</taxon>
        <taxon>Evosea</taxon>
        <taxon>Eumycetozoa</taxon>
        <taxon>Dictyostelia</taxon>
        <taxon>Dictyosteliales</taxon>
        <taxon>Dictyosteliaceae</taxon>
        <taxon>Dictyostelium</taxon>
    </lineage>
</organism>